<name>UQCC2_BOVIN</name>
<organism>
    <name type="scientific">Bos taurus</name>
    <name type="common">Bovine</name>
    <dbReference type="NCBI Taxonomy" id="9913"/>
    <lineage>
        <taxon>Eukaryota</taxon>
        <taxon>Metazoa</taxon>
        <taxon>Chordata</taxon>
        <taxon>Craniata</taxon>
        <taxon>Vertebrata</taxon>
        <taxon>Euteleostomi</taxon>
        <taxon>Mammalia</taxon>
        <taxon>Eutheria</taxon>
        <taxon>Laurasiatheria</taxon>
        <taxon>Artiodactyla</taxon>
        <taxon>Ruminantia</taxon>
        <taxon>Pecora</taxon>
        <taxon>Bovidae</taxon>
        <taxon>Bovinae</taxon>
        <taxon>Bos</taxon>
    </lineage>
</organism>
<sequence>MAASRYRRFLKLCEEWPVDETKRGRDLGAYLRQRVAQAFREGENTQVAEPEACDEMYESLARLHSNYYKHKYPRPRETSFSGLSLEEYKLILSTDTLDEFKEMNKGTWKKLQEKFAPGSPEGKHTAWARALPRPRT</sequence>
<reference key="1">
    <citation type="journal article" date="2005" name="BMC Genomics">
        <title>Characterization of 954 bovine full-CDS cDNA sequences.</title>
        <authorList>
            <person name="Harhay G.P."/>
            <person name="Sonstegard T.S."/>
            <person name="Keele J.W."/>
            <person name="Heaton M.P."/>
            <person name="Clawson M.L."/>
            <person name="Snelling W.M."/>
            <person name="Wiedmann R.T."/>
            <person name="Van Tassell C.P."/>
            <person name="Smith T.P.L."/>
        </authorList>
    </citation>
    <scope>NUCLEOTIDE SEQUENCE [LARGE SCALE MRNA] (ISOFORM 2)</scope>
</reference>
<reference key="2">
    <citation type="journal article" date="2009" name="Genome Biol.">
        <title>A whole-genome assembly of the domestic cow, Bos taurus.</title>
        <authorList>
            <person name="Zimin A.V."/>
            <person name="Delcher A.L."/>
            <person name="Florea L."/>
            <person name="Kelley D.R."/>
            <person name="Schatz M.C."/>
            <person name="Puiu D."/>
            <person name="Hanrahan F."/>
            <person name="Pertea G."/>
            <person name="Van Tassell C.P."/>
            <person name="Sonstegard T.S."/>
            <person name="Marcais G."/>
            <person name="Roberts M."/>
            <person name="Subramanian P."/>
            <person name="Yorke J.A."/>
            <person name="Salzberg S.L."/>
        </authorList>
    </citation>
    <scope>NUCLEOTIDE SEQUENCE [LARGE SCALE GENOMIC DNA]</scope>
    <source>
        <strain>Hereford</strain>
    </source>
</reference>
<reference key="3">
    <citation type="submission" date="2005-08" db="EMBL/GenBank/DDBJ databases">
        <authorList>
            <consortium name="NIH - Mammalian Gene Collection (MGC) project"/>
        </authorList>
    </citation>
    <scope>NUCLEOTIDE SEQUENCE [LARGE SCALE MRNA] (ISOFORM 1)</scope>
    <source>
        <strain>Hereford</strain>
        <tissue>Hypothalamus</tissue>
    </source>
</reference>
<evidence type="ECO:0000250" key="1"/>
<evidence type="ECO:0000250" key="2">
    <source>
        <dbReference type="UniProtKB" id="Q9BRT2"/>
    </source>
</evidence>
<evidence type="ECO:0000250" key="3">
    <source>
        <dbReference type="UniProtKB" id="Q9CQY6"/>
    </source>
</evidence>
<evidence type="ECO:0000256" key="4">
    <source>
        <dbReference type="SAM" id="MobiDB-lite"/>
    </source>
</evidence>
<evidence type="ECO:0000303" key="5">
    <source>
    </source>
</evidence>
<evidence type="ECO:0000305" key="6"/>
<feature type="transit peptide" description="Mitochondrion" evidence="1">
    <location>
        <begin position="1"/>
        <end position="13"/>
    </location>
</feature>
<feature type="chain" id="PRO_0000416461" description="Ubiquinol-cytochrome c reductase complex assembly factor 2">
    <location>
        <begin position="14"/>
        <end position="136"/>
    </location>
</feature>
<feature type="region of interest" description="Disordered" evidence="4">
    <location>
        <begin position="114"/>
        <end position="136"/>
    </location>
</feature>
<feature type="splice variant" id="VSP_042620" description="In isoform 2." evidence="5">
    <original>MAASRYRRFLKLCEEWPVDETKRGRDLGAYLRQRVAQAFREGENT</original>
    <variation>MVVQDNVDAPGVPLEPFLHQVGGHLSVMRYDEHTVCKPLISREQRFYESLPLAMKRFTPQYKGTITVHLQKDSRGRLSLVANPLTENRGPFTVSTESAAVAIWQTLQQTTGGSALPLAQWQHPQRAHSLKESPATALLRSELHLKAQVPSLVEDANGNLTEKGSFNPWGLHCHQAHLSRLCAEYPENKRHRFLLLENVVSQYKHPCILDLKMGTRQHGDDASEEKKARHMRKCAQSTSAHLGMRICGM</variation>
    <location>
        <begin position="1"/>
        <end position="45"/>
    </location>
</feature>
<feature type="sequence conflict" description="In Ref. 2; AAX46469." evidence="6" ref="2">
    <original>N</original>
    <variation>S</variation>
    <location sequence="Q3SZ13-2">
        <position position="6"/>
    </location>
</feature>
<feature type="sequence conflict" description="In Ref. 2; AAX46469." evidence="6" ref="2">
    <original>A</original>
    <variation>T</variation>
    <location sequence="Q3SZ13-2">
        <position position="118"/>
    </location>
</feature>
<dbReference type="EMBL" id="BT021622">
    <property type="protein sequence ID" value="AAX46469.1"/>
    <property type="molecule type" value="mRNA"/>
</dbReference>
<dbReference type="EMBL" id="DAAA02054906">
    <property type="status" value="NOT_ANNOTATED_CDS"/>
    <property type="molecule type" value="Genomic_DNA"/>
</dbReference>
<dbReference type="EMBL" id="BC103264">
    <property type="protein sequence ID" value="AAI03265.1"/>
    <property type="molecule type" value="mRNA"/>
</dbReference>
<dbReference type="RefSeq" id="NP_001193543.1">
    <molecule id="Q3SZ13-1"/>
    <property type="nucleotide sequence ID" value="NM_001206614.1"/>
</dbReference>
<dbReference type="FunCoup" id="Q3SZ13">
    <property type="interactions" value="509"/>
</dbReference>
<dbReference type="Ensembl" id="ENSBTAT00000047742.3">
    <molecule id="Q3SZ13-1"/>
    <property type="protein sequence ID" value="ENSBTAP00000044920.1"/>
    <property type="gene ID" value="ENSBTAG00000054726.2"/>
</dbReference>
<dbReference type="GeneID" id="100607974"/>
<dbReference type="KEGG" id="bta:100607974"/>
<dbReference type="CTD" id="84300"/>
<dbReference type="VEuPathDB" id="HostDB:ENSBTAG00000054726"/>
<dbReference type="GeneTree" id="ENSGT00510000048041"/>
<dbReference type="HOGENOM" id="CLU_070591_0_0_1"/>
<dbReference type="InParanoid" id="Q3SZ13"/>
<dbReference type="OMA" id="CEEWPKD"/>
<dbReference type="OrthoDB" id="6266314at2759"/>
<dbReference type="Proteomes" id="UP000009136">
    <property type="component" value="Chromosome 23"/>
</dbReference>
<dbReference type="Bgee" id="ENSBTAG00000054726">
    <property type="expression patterns" value="Expressed in oocyte and 105 other cell types or tissues"/>
</dbReference>
<dbReference type="GO" id="GO:0005743">
    <property type="term" value="C:mitochondrial inner membrane"/>
    <property type="evidence" value="ECO:0000250"/>
    <property type="project" value="UniProtKB"/>
</dbReference>
<dbReference type="GO" id="GO:0005758">
    <property type="term" value="C:mitochondrial intermembrane space"/>
    <property type="evidence" value="ECO:0000250"/>
    <property type="project" value="UniProtKB"/>
</dbReference>
<dbReference type="GO" id="GO:0005759">
    <property type="term" value="C:mitochondrial matrix"/>
    <property type="evidence" value="ECO:0000250"/>
    <property type="project" value="UniProtKB"/>
</dbReference>
<dbReference type="GO" id="GO:0042645">
    <property type="term" value="C:mitochondrial nucleoid"/>
    <property type="evidence" value="ECO:0000250"/>
    <property type="project" value="UniProtKB"/>
</dbReference>
<dbReference type="GO" id="GO:0005739">
    <property type="term" value="C:mitochondrion"/>
    <property type="evidence" value="ECO:0000250"/>
    <property type="project" value="UniProtKB"/>
</dbReference>
<dbReference type="GO" id="GO:0016604">
    <property type="term" value="C:nuclear body"/>
    <property type="evidence" value="ECO:0007669"/>
    <property type="project" value="Ensembl"/>
</dbReference>
<dbReference type="GO" id="GO:0034551">
    <property type="term" value="P:mitochondrial respiratory chain complex III assembly"/>
    <property type="evidence" value="ECO:0000250"/>
    <property type="project" value="UniProtKB"/>
</dbReference>
<dbReference type="GO" id="GO:0070131">
    <property type="term" value="P:positive regulation of mitochondrial translation"/>
    <property type="evidence" value="ECO:0000250"/>
    <property type="project" value="UniProtKB"/>
</dbReference>
<dbReference type="GO" id="GO:0050796">
    <property type="term" value="P:regulation of insulin secretion"/>
    <property type="evidence" value="ECO:0000250"/>
    <property type="project" value="UniProtKB"/>
</dbReference>
<dbReference type="GO" id="GO:0002082">
    <property type="term" value="P:regulation of oxidative phosphorylation"/>
    <property type="evidence" value="ECO:0000250"/>
    <property type="project" value="UniProtKB"/>
</dbReference>
<dbReference type="GO" id="GO:2001014">
    <property type="term" value="P:regulation of skeletal muscle cell differentiation"/>
    <property type="evidence" value="ECO:0000250"/>
    <property type="project" value="UniProtKB"/>
</dbReference>
<dbReference type="InterPro" id="IPR037698">
    <property type="entry name" value="UQCC2"/>
</dbReference>
<dbReference type="PANTHER" id="PTHR34260">
    <property type="entry name" value="UBIQUINOL-CYTOCHROME-C REDUCTASE COMPLEX ASSEMBLY FACTOR 2"/>
    <property type="match status" value="1"/>
</dbReference>
<dbReference type="PANTHER" id="PTHR34260:SF1">
    <property type="entry name" value="UBIQUINOL-CYTOCHROME-C REDUCTASE COMPLEX ASSEMBLY FACTOR 2"/>
    <property type="match status" value="1"/>
</dbReference>
<dbReference type="Pfam" id="PF20180">
    <property type="entry name" value="UQCC2_CBP6"/>
    <property type="match status" value="1"/>
</dbReference>
<gene>
    <name type="primary">UQCC2</name>
    <name type="synonym">MNF1</name>
</gene>
<keyword id="KW-0025">Alternative splicing</keyword>
<keyword id="KW-0472">Membrane</keyword>
<keyword id="KW-0496">Mitochondrion</keyword>
<keyword id="KW-0999">Mitochondrion inner membrane</keyword>
<keyword id="KW-1135">Mitochondrion nucleoid</keyword>
<keyword id="KW-1185">Reference proteome</keyword>
<keyword id="KW-0809">Transit peptide</keyword>
<comment type="function">
    <text evidence="2 3">Required for the assembly of the ubiquinol-cytochrome c reductase complex (mitochondrial respiratory chain complex III or cytochrome b-c1 complex). Plays a role in the modulation of respiratory chain activities such as oxygen consumption and ATP production and via its modulation of the respiratory chain activity can regulate skeletal muscle differentiation and insulin secretion by pancreatic beta-cells. Involved in cytochrome b translation and/or stability.</text>
</comment>
<comment type="subunit">
    <text evidence="2 3">Interacts with UQCC1 (By similarity). Forms a complex, named COMB/coordinator of mitochondrial CYTB biogenesis, composed of UQCC1, UQCC2, UQCC4, UQCC5 and UQCC6; stabilizes nascent cytochrome b/MT-CYB and promotes its membrane insertion. Forms a complex, named COMB/coordinator of mitochondrial CYTB biogenesis, composed of UQCC1, UQCC2, UQCC4, UQCC5 and UQCC6; stabilizes nascent cytochrome b/MT-CYB and promotes its membrane insertion. Forms a complex, named COMA, composed of UQCC1, UQCC2 and UQCC4; activates MT-CYB translation. Forms a complex, named COMC, composed of UQCC1, UQCC2; UQCC3 and UQCC4; mediates MT-CYB hemylation and association with the first nuclear-encoded CIII subunit UQCRQ (By similarity).</text>
</comment>
<comment type="subcellular location">
    <subcellularLocation>
        <location evidence="1">Mitochondrion matrix</location>
        <location evidence="1">Mitochondrion nucleoid</location>
    </subcellularLocation>
    <subcellularLocation>
        <location evidence="1">Mitochondrion</location>
    </subcellularLocation>
    <subcellularLocation>
        <location evidence="1">Mitochondrion intermembrane space</location>
    </subcellularLocation>
    <subcellularLocation>
        <location evidence="1">Mitochondrion matrix</location>
    </subcellularLocation>
    <subcellularLocation>
        <location evidence="1">Mitochondrion inner membrane</location>
    </subcellularLocation>
    <text evidence="1">Predominantly expressed in the mitochondrial inner membrane.</text>
</comment>
<comment type="alternative products">
    <event type="alternative splicing"/>
    <isoform>
        <id>Q3SZ13-1</id>
        <name>1</name>
        <sequence type="displayed"/>
    </isoform>
    <isoform>
        <id>Q3SZ13-2</id>
        <name>2</name>
        <sequence type="described" ref="VSP_042620"/>
    </isoform>
</comment>
<protein>
    <recommendedName>
        <fullName>Ubiquinol-cytochrome c reductase complex assembly factor 2</fullName>
    </recommendedName>
    <alternativeName>
        <fullName>Mitochondrial nucleoid factor 1</fullName>
    </alternativeName>
    <alternativeName>
        <fullName>Mitochondrial protein M19</fullName>
    </alternativeName>
</protein>
<proteinExistence type="evidence at transcript level"/>
<accession>Q3SZ13</accession>
<accession>Q58DH5</accession>